<dbReference type="EC" id="2.5.1.75" evidence="1"/>
<dbReference type="EMBL" id="CP000325">
    <property type="protein sequence ID" value="ABL05630.1"/>
    <property type="molecule type" value="Genomic_DNA"/>
</dbReference>
<dbReference type="RefSeq" id="WP_011741236.1">
    <property type="nucleotide sequence ID" value="NC_008611.1"/>
</dbReference>
<dbReference type="SMR" id="A0PTG1"/>
<dbReference type="KEGG" id="mul:MUL_3469"/>
<dbReference type="eggNOG" id="COG0324">
    <property type="taxonomic scope" value="Bacteria"/>
</dbReference>
<dbReference type="HOGENOM" id="CLU_032616_0_1_11"/>
<dbReference type="Proteomes" id="UP000000765">
    <property type="component" value="Chromosome"/>
</dbReference>
<dbReference type="GO" id="GO:0005524">
    <property type="term" value="F:ATP binding"/>
    <property type="evidence" value="ECO:0007669"/>
    <property type="project" value="UniProtKB-UniRule"/>
</dbReference>
<dbReference type="GO" id="GO:0052381">
    <property type="term" value="F:tRNA dimethylallyltransferase activity"/>
    <property type="evidence" value="ECO:0007669"/>
    <property type="project" value="UniProtKB-UniRule"/>
</dbReference>
<dbReference type="GO" id="GO:0006400">
    <property type="term" value="P:tRNA modification"/>
    <property type="evidence" value="ECO:0007669"/>
    <property type="project" value="TreeGrafter"/>
</dbReference>
<dbReference type="FunFam" id="1.10.20.140:FF:000001">
    <property type="entry name" value="tRNA dimethylallyltransferase"/>
    <property type="match status" value="1"/>
</dbReference>
<dbReference type="Gene3D" id="1.10.20.140">
    <property type="match status" value="1"/>
</dbReference>
<dbReference type="Gene3D" id="3.40.50.300">
    <property type="entry name" value="P-loop containing nucleotide triphosphate hydrolases"/>
    <property type="match status" value="1"/>
</dbReference>
<dbReference type="HAMAP" id="MF_00185">
    <property type="entry name" value="IPP_trans"/>
    <property type="match status" value="1"/>
</dbReference>
<dbReference type="InterPro" id="IPR039657">
    <property type="entry name" value="Dimethylallyltransferase"/>
</dbReference>
<dbReference type="InterPro" id="IPR018022">
    <property type="entry name" value="IPT"/>
</dbReference>
<dbReference type="InterPro" id="IPR027417">
    <property type="entry name" value="P-loop_NTPase"/>
</dbReference>
<dbReference type="NCBIfam" id="TIGR00174">
    <property type="entry name" value="miaA"/>
    <property type="match status" value="1"/>
</dbReference>
<dbReference type="PANTHER" id="PTHR11088">
    <property type="entry name" value="TRNA DIMETHYLALLYLTRANSFERASE"/>
    <property type="match status" value="1"/>
</dbReference>
<dbReference type="PANTHER" id="PTHR11088:SF60">
    <property type="entry name" value="TRNA DIMETHYLALLYLTRANSFERASE"/>
    <property type="match status" value="1"/>
</dbReference>
<dbReference type="Pfam" id="PF01715">
    <property type="entry name" value="IPPT"/>
    <property type="match status" value="1"/>
</dbReference>
<dbReference type="SUPFAM" id="SSF52540">
    <property type="entry name" value="P-loop containing nucleoside triphosphate hydrolases"/>
    <property type="match status" value="1"/>
</dbReference>
<proteinExistence type="inferred from homology"/>
<sequence length="314" mass="34345">MRPLTIIGPTGTGKSDSAIEIADRLSSKIAVEIVNADAYQLYRGMDIGTGKVPLAQRRGIPHHQLDVLDVTETATVAGYQRSAAADIEAIASRGALPLLVGGSMLYVQSLLDDWAFPAKDPAIRARWERRLAQVGPARLHADLVRRDPAAAAVIPLNDARRTVRALEVVEITGRPYAASAPRIGSPRWDSAIIGLDCETKVLDERLAARTKAMFDRGLIEEVISLLPCGLARGVTASRALGYAQVMEALKAGADTQALDRARQQTCLATRRYVRRQRSWFRRDRRVRWLDATVSTAAHRTAIIEAVLGAWRRAS</sequence>
<protein>
    <recommendedName>
        <fullName evidence="1">tRNA dimethylallyltransferase 2</fullName>
        <ecNumber evidence="1">2.5.1.75</ecNumber>
    </recommendedName>
    <alternativeName>
        <fullName evidence="1">Dimethylallyl diphosphate:tRNA dimethylallyltransferase 2</fullName>
        <shortName evidence="1">DMAPP:tRNA dimethylallyltransferase 2</shortName>
        <shortName evidence="1">DMATase 2</shortName>
    </alternativeName>
    <alternativeName>
        <fullName evidence="1">Isopentenyl-diphosphate:tRNA isopentenyltransferase 2</fullName>
        <shortName evidence="1">IPP transferase 2</shortName>
        <shortName evidence="1">IPPT 2</shortName>
        <shortName evidence="1">IPTase 2</shortName>
    </alternativeName>
</protein>
<accession>A0PTG1</accession>
<feature type="chain" id="PRO_0000377233" description="tRNA dimethylallyltransferase 2">
    <location>
        <begin position="1"/>
        <end position="314"/>
    </location>
</feature>
<feature type="binding site" evidence="1">
    <location>
        <begin position="8"/>
        <end position="15"/>
    </location>
    <ligand>
        <name>ATP</name>
        <dbReference type="ChEBI" id="CHEBI:30616"/>
    </ligand>
</feature>
<feature type="binding site" evidence="1">
    <location>
        <begin position="10"/>
        <end position="15"/>
    </location>
    <ligand>
        <name>substrate</name>
    </ligand>
</feature>
<feature type="site" description="Interaction with substrate tRNA" evidence="1">
    <location>
        <position position="103"/>
    </location>
</feature>
<feature type="site" description="Interaction with substrate tRNA" evidence="1">
    <location>
        <position position="124"/>
    </location>
</feature>
<organism>
    <name type="scientific">Mycobacterium ulcerans (strain Agy99)</name>
    <dbReference type="NCBI Taxonomy" id="362242"/>
    <lineage>
        <taxon>Bacteria</taxon>
        <taxon>Bacillati</taxon>
        <taxon>Actinomycetota</taxon>
        <taxon>Actinomycetes</taxon>
        <taxon>Mycobacteriales</taxon>
        <taxon>Mycobacteriaceae</taxon>
        <taxon>Mycobacterium</taxon>
        <taxon>Mycobacterium ulcerans group</taxon>
    </lineage>
</organism>
<name>MIAA2_MYCUA</name>
<reference key="1">
    <citation type="journal article" date="2007" name="Genome Res.">
        <title>Reductive evolution and niche adaptation inferred from the genome of Mycobacterium ulcerans, the causative agent of Buruli ulcer.</title>
        <authorList>
            <person name="Stinear T.P."/>
            <person name="Seemann T."/>
            <person name="Pidot S."/>
            <person name="Frigui W."/>
            <person name="Reysset G."/>
            <person name="Garnier T."/>
            <person name="Meurice G."/>
            <person name="Simon D."/>
            <person name="Bouchier C."/>
            <person name="Ma L."/>
            <person name="Tichit M."/>
            <person name="Porter J.L."/>
            <person name="Ryan J."/>
            <person name="Johnson P.D.R."/>
            <person name="Davies J.K."/>
            <person name="Jenkin G.A."/>
            <person name="Small P.L.C."/>
            <person name="Jones L.M."/>
            <person name="Tekaia F."/>
            <person name="Laval F."/>
            <person name="Daffe M."/>
            <person name="Parkhill J."/>
            <person name="Cole S.T."/>
        </authorList>
    </citation>
    <scope>NUCLEOTIDE SEQUENCE [LARGE SCALE GENOMIC DNA]</scope>
    <source>
        <strain>Agy99</strain>
    </source>
</reference>
<keyword id="KW-0067">ATP-binding</keyword>
<keyword id="KW-0460">Magnesium</keyword>
<keyword id="KW-0547">Nucleotide-binding</keyword>
<keyword id="KW-0808">Transferase</keyword>
<keyword id="KW-0819">tRNA processing</keyword>
<gene>
    <name evidence="1" type="primary">miaA2</name>
    <name type="ordered locus">MUL_3469</name>
</gene>
<comment type="function">
    <text evidence="1">Catalyzes the transfer of a dimethylallyl group onto the adenine at position 37 in tRNAs that read codons beginning with uridine, leading to the formation of N6-(dimethylallyl)adenosine (i(6)A).</text>
</comment>
<comment type="catalytic activity">
    <reaction evidence="1">
        <text>adenosine(37) in tRNA + dimethylallyl diphosphate = N(6)-dimethylallyladenosine(37) in tRNA + diphosphate</text>
        <dbReference type="Rhea" id="RHEA:26482"/>
        <dbReference type="Rhea" id="RHEA-COMP:10162"/>
        <dbReference type="Rhea" id="RHEA-COMP:10375"/>
        <dbReference type="ChEBI" id="CHEBI:33019"/>
        <dbReference type="ChEBI" id="CHEBI:57623"/>
        <dbReference type="ChEBI" id="CHEBI:74411"/>
        <dbReference type="ChEBI" id="CHEBI:74415"/>
        <dbReference type="EC" id="2.5.1.75"/>
    </reaction>
</comment>
<comment type="cofactor">
    <cofactor evidence="1">
        <name>Mg(2+)</name>
        <dbReference type="ChEBI" id="CHEBI:18420"/>
    </cofactor>
</comment>
<comment type="subunit">
    <text evidence="1">Monomer.</text>
</comment>
<comment type="similarity">
    <text evidence="1">Belongs to the IPP transferase family.</text>
</comment>
<evidence type="ECO:0000255" key="1">
    <source>
        <dbReference type="HAMAP-Rule" id="MF_00185"/>
    </source>
</evidence>